<reference key="1">
    <citation type="submission" date="2007-07" db="EMBL/GenBank/DDBJ databases">
        <title>Genome sequence of Campylobacter curvus 525.92 isolated from human feces.</title>
        <authorList>
            <person name="Fouts D.E."/>
            <person name="Mongodin E.F."/>
            <person name="Puiu D."/>
            <person name="Sebastian Y."/>
            <person name="Miller W.G."/>
            <person name="Mandrell R.E."/>
            <person name="Lastovica A.J."/>
            <person name="Nelson K.E."/>
        </authorList>
    </citation>
    <scope>NUCLEOTIDE SEQUENCE [LARGE SCALE GENOMIC DNA]</scope>
    <source>
        <strain>525.92</strain>
    </source>
</reference>
<feature type="chain" id="PRO_1000023720" description="Transcription antitermination protein NusB">
    <location>
        <begin position="1"/>
        <end position="131"/>
    </location>
</feature>
<organism>
    <name type="scientific">Campylobacter curvus (strain 525.92)</name>
    <dbReference type="NCBI Taxonomy" id="360105"/>
    <lineage>
        <taxon>Bacteria</taxon>
        <taxon>Pseudomonadati</taxon>
        <taxon>Campylobacterota</taxon>
        <taxon>Epsilonproteobacteria</taxon>
        <taxon>Campylobacterales</taxon>
        <taxon>Campylobacteraceae</taxon>
        <taxon>Campylobacter</taxon>
    </lineage>
</organism>
<dbReference type="EMBL" id="CP000767">
    <property type="protein sequence ID" value="EAU00926.1"/>
    <property type="molecule type" value="Genomic_DNA"/>
</dbReference>
<dbReference type="RefSeq" id="WP_011991933.1">
    <property type="nucleotide sequence ID" value="NC_009715.2"/>
</dbReference>
<dbReference type="SMR" id="A7GWZ7"/>
<dbReference type="STRING" id="360105.CCV52592_1180"/>
<dbReference type="KEGG" id="ccv:CCV52592_1180"/>
<dbReference type="HOGENOM" id="CLU_087843_3_3_7"/>
<dbReference type="OrthoDB" id="9797817at2"/>
<dbReference type="Proteomes" id="UP000006380">
    <property type="component" value="Chromosome"/>
</dbReference>
<dbReference type="GO" id="GO:0005829">
    <property type="term" value="C:cytosol"/>
    <property type="evidence" value="ECO:0007669"/>
    <property type="project" value="TreeGrafter"/>
</dbReference>
<dbReference type="GO" id="GO:0003723">
    <property type="term" value="F:RNA binding"/>
    <property type="evidence" value="ECO:0007669"/>
    <property type="project" value="UniProtKB-UniRule"/>
</dbReference>
<dbReference type="GO" id="GO:0006353">
    <property type="term" value="P:DNA-templated transcription termination"/>
    <property type="evidence" value="ECO:0007669"/>
    <property type="project" value="UniProtKB-UniRule"/>
</dbReference>
<dbReference type="GO" id="GO:0031564">
    <property type="term" value="P:transcription antitermination"/>
    <property type="evidence" value="ECO:0007669"/>
    <property type="project" value="UniProtKB-KW"/>
</dbReference>
<dbReference type="Gene3D" id="1.10.940.10">
    <property type="entry name" value="NusB-like"/>
    <property type="match status" value="1"/>
</dbReference>
<dbReference type="HAMAP" id="MF_00073">
    <property type="entry name" value="NusB"/>
    <property type="match status" value="1"/>
</dbReference>
<dbReference type="InterPro" id="IPR035926">
    <property type="entry name" value="NusB-like_sf"/>
</dbReference>
<dbReference type="InterPro" id="IPR011605">
    <property type="entry name" value="NusB_fam"/>
</dbReference>
<dbReference type="InterPro" id="IPR006027">
    <property type="entry name" value="NusB_RsmB_TIM44"/>
</dbReference>
<dbReference type="NCBIfam" id="TIGR01951">
    <property type="entry name" value="nusB"/>
    <property type="match status" value="1"/>
</dbReference>
<dbReference type="PANTHER" id="PTHR11078:SF3">
    <property type="entry name" value="ANTITERMINATION NUSB DOMAIN-CONTAINING PROTEIN"/>
    <property type="match status" value="1"/>
</dbReference>
<dbReference type="PANTHER" id="PTHR11078">
    <property type="entry name" value="N UTILIZATION SUBSTANCE PROTEIN B-RELATED"/>
    <property type="match status" value="1"/>
</dbReference>
<dbReference type="Pfam" id="PF01029">
    <property type="entry name" value="NusB"/>
    <property type="match status" value="1"/>
</dbReference>
<dbReference type="SUPFAM" id="SSF48013">
    <property type="entry name" value="NusB-like"/>
    <property type="match status" value="1"/>
</dbReference>
<comment type="function">
    <text evidence="1">Involved in transcription antitermination. Required for transcription of ribosomal RNA (rRNA) genes. Binds specifically to the boxA antiterminator sequence of the ribosomal RNA (rrn) operons.</text>
</comment>
<comment type="similarity">
    <text evidence="1">Belongs to the NusB family.</text>
</comment>
<proteinExistence type="inferred from homology"/>
<keyword id="KW-1185">Reference proteome</keyword>
<keyword id="KW-0694">RNA-binding</keyword>
<keyword id="KW-0804">Transcription</keyword>
<keyword id="KW-0889">Transcription antitermination</keyword>
<keyword id="KW-0805">Transcription regulation</keyword>
<sequence>MATRHQVRQAVVSLLYAHEMGSEMNEFKDEFLEEKKIRNERKIQALETFDAICLKKGELDEILKPYLKEKDIERIGIVELAILRLGVYEMKFTGTDKAVIINEAIELAKELGGDSAPKFINGVLDALKGEM</sequence>
<evidence type="ECO:0000255" key="1">
    <source>
        <dbReference type="HAMAP-Rule" id="MF_00073"/>
    </source>
</evidence>
<name>NUSB_CAMC5</name>
<gene>
    <name evidence="1" type="primary">nusB</name>
    <name type="ordered locus">Ccur92_04350</name>
    <name type="ORF">CCV52592_1180</name>
</gene>
<accession>A7GWZ7</accession>
<protein>
    <recommendedName>
        <fullName evidence="1">Transcription antitermination protein NusB</fullName>
    </recommendedName>
    <alternativeName>
        <fullName evidence="1">Antitermination factor NusB</fullName>
    </alternativeName>
</protein>